<organism>
    <name type="scientific">Ralstonia nicotianae (strain ATCC BAA-1114 / GMI1000)</name>
    <name type="common">Ralstonia solanacearum</name>
    <dbReference type="NCBI Taxonomy" id="267608"/>
    <lineage>
        <taxon>Bacteria</taxon>
        <taxon>Pseudomonadati</taxon>
        <taxon>Pseudomonadota</taxon>
        <taxon>Betaproteobacteria</taxon>
        <taxon>Burkholderiales</taxon>
        <taxon>Burkholderiaceae</taxon>
        <taxon>Ralstonia</taxon>
        <taxon>Ralstonia solanacearum species complex</taxon>
    </lineage>
</organism>
<accession>Q8XYY7</accession>
<protein>
    <recommendedName>
        <fullName evidence="1">Dihydroorotate dehydrogenase (quinone)</fullName>
        <ecNumber evidence="1">1.3.5.2</ecNumber>
    </recommendedName>
    <alternativeName>
        <fullName evidence="1">DHOdehase</fullName>
        <shortName evidence="1">DHOD</shortName>
        <shortName evidence="1">DHODase</shortName>
    </alternativeName>
    <alternativeName>
        <fullName evidence="1">Dihydroorotate oxidase</fullName>
    </alternativeName>
</protein>
<sequence length="344" mass="36635">MLNALYPLARPLLFSMDPEDAHHFTLNQLKRAHALGLSGCIGARVAPQPRTVMGIAFPNPVGLAAGLDKDGAYIDALGALGFGFIEVGTVTPRAQPGNPRPRMFRLPAASALINRMGFNNGGVDAFIRNVQASKWREAGGVLGLNIGKNADTPIERAVDDYLHCLERVYPYASYVTVNISSPNTKNLRQLQGASELDSLLGTLRGAQQRLADQHKRYVPVVLKIAPDLDDDQIANIGDALLRHRMDGVIATNTTIRREAVAGLPHAEEAGGLSGQPVREGSTRVIRALCGLLGDAVPIIGVGGILAGEHAREKIDAGAQLVQLYTGLIYRGPGLVAECARALAR</sequence>
<name>PYRD_RALN1</name>
<gene>
    <name evidence="1" type="primary">pyrD</name>
    <name type="ordered locus">RSc1619</name>
    <name type="ORF">RS03940</name>
</gene>
<evidence type="ECO:0000255" key="1">
    <source>
        <dbReference type="HAMAP-Rule" id="MF_00225"/>
    </source>
</evidence>
<dbReference type="EC" id="1.3.5.2" evidence="1"/>
<dbReference type="EMBL" id="AL646052">
    <property type="protein sequence ID" value="CAD15321.1"/>
    <property type="molecule type" value="Genomic_DNA"/>
</dbReference>
<dbReference type="RefSeq" id="WP_011001561.1">
    <property type="nucleotide sequence ID" value="NC_003295.1"/>
</dbReference>
<dbReference type="SMR" id="Q8XYY7"/>
<dbReference type="STRING" id="267608.RSc1619"/>
<dbReference type="EnsemblBacteria" id="CAD15321">
    <property type="protein sequence ID" value="CAD15321"/>
    <property type="gene ID" value="RSc1619"/>
</dbReference>
<dbReference type="KEGG" id="rso:RSc1619"/>
<dbReference type="PATRIC" id="fig|267608.8.peg.1657"/>
<dbReference type="eggNOG" id="COG0167">
    <property type="taxonomic scope" value="Bacteria"/>
</dbReference>
<dbReference type="HOGENOM" id="CLU_013640_2_0_4"/>
<dbReference type="UniPathway" id="UPA00070">
    <property type="reaction ID" value="UER00946"/>
</dbReference>
<dbReference type="Proteomes" id="UP000001436">
    <property type="component" value="Chromosome"/>
</dbReference>
<dbReference type="GO" id="GO:0005737">
    <property type="term" value="C:cytoplasm"/>
    <property type="evidence" value="ECO:0007669"/>
    <property type="project" value="InterPro"/>
</dbReference>
<dbReference type="GO" id="GO:0005886">
    <property type="term" value="C:plasma membrane"/>
    <property type="evidence" value="ECO:0007669"/>
    <property type="project" value="UniProtKB-SubCell"/>
</dbReference>
<dbReference type="GO" id="GO:0106430">
    <property type="term" value="F:dihydroorotate dehydrogenase (quinone) activity"/>
    <property type="evidence" value="ECO:0007669"/>
    <property type="project" value="UniProtKB-EC"/>
</dbReference>
<dbReference type="GO" id="GO:0006207">
    <property type="term" value="P:'de novo' pyrimidine nucleobase biosynthetic process"/>
    <property type="evidence" value="ECO:0007669"/>
    <property type="project" value="InterPro"/>
</dbReference>
<dbReference type="GO" id="GO:0044205">
    <property type="term" value="P:'de novo' UMP biosynthetic process"/>
    <property type="evidence" value="ECO:0007669"/>
    <property type="project" value="UniProtKB-UniRule"/>
</dbReference>
<dbReference type="CDD" id="cd04738">
    <property type="entry name" value="DHOD_2_like"/>
    <property type="match status" value="1"/>
</dbReference>
<dbReference type="FunFam" id="3.20.20.70:FF:000028">
    <property type="entry name" value="Dihydroorotate dehydrogenase (quinone)"/>
    <property type="match status" value="1"/>
</dbReference>
<dbReference type="Gene3D" id="3.20.20.70">
    <property type="entry name" value="Aldolase class I"/>
    <property type="match status" value="1"/>
</dbReference>
<dbReference type="HAMAP" id="MF_00225">
    <property type="entry name" value="DHO_dh_type2"/>
    <property type="match status" value="1"/>
</dbReference>
<dbReference type="InterPro" id="IPR013785">
    <property type="entry name" value="Aldolase_TIM"/>
</dbReference>
<dbReference type="InterPro" id="IPR050074">
    <property type="entry name" value="DHO_dehydrogenase"/>
</dbReference>
<dbReference type="InterPro" id="IPR012135">
    <property type="entry name" value="Dihydroorotate_DH_1_2"/>
</dbReference>
<dbReference type="InterPro" id="IPR005719">
    <property type="entry name" value="Dihydroorotate_DH_2"/>
</dbReference>
<dbReference type="InterPro" id="IPR005720">
    <property type="entry name" value="Dihydroorotate_DH_cat"/>
</dbReference>
<dbReference type="InterPro" id="IPR001295">
    <property type="entry name" value="Dihydroorotate_DH_CS"/>
</dbReference>
<dbReference type="NCBIfam" id="NF003644">
    <property type="entry name" value="PRK05286.1-1"/>
    <property type="match status" value="1"/>
</dbReference>
<dbReference type="NCBIfam" id="NF003645">
    <property type="entry name" value="PRK05286.1-2"/>
    <property type="match status" value="1"/>
</dbReference>
<dbReference type="NCBIfam" id="NF003646">
    <property type="entry name" value="PRK05286.1-4"/>
    <property type="match status" value="1"/>
</dbReference>
<dbReference type="NCBIfam" id="NF003652">
    <property type="entry name" value="PRK05286.2-5"/>
    <property type="match status" value="1"/>
</dbReference>
<dbReference type="NCBIfam" id="TIGR01036">
    <property type="entry name" value="pyrD_sub2"/>
    <property type="match status" value="1"/>
</dbReference>
<dbReference type="PANTHER" id="PTHR48109:SF4">
    <property type="entry name" value="DIHYDROOROTATE DEHYDROGENASE (QUINONE), MITOCHONDRIAL"/>
    <property type="match status" value="1"/>
</dbReference>
<dbReference type="PANTHER" id="PTHR48109">
    <property type="entry name" value="DIHYDROOROTATE DEHYDROGENASE (QUINONE), MITOCHONDRIAL-RELATED"/>
    <property type="match status" value="1"/>
</dbReference>
<dbReference type="Pfam" id="PF01180">
    <property type="entry name" value="DHO_dh"/>
    <property type="match status" value="1"/>
</dbReference>
<dbReference type="PIRSF" id="PIRSF000164">
    <property type="entry name" value="DHO_oxidase"/>
    <property type="match status" value="1"/>
</dbReference>
<dbReference type="SUPFAM" id="SSF51395">
    <property type="entry name" value="FMN-linked oxidoreductases"/>
    <property type="match status" value="1"/>
</dbReference>
<dbReference type="PROSITE" id="PS00911">
    <property type="entry name" value="DHODEHASE_1"/>
    <property type="match status" value="1"/>
</dbReference>
<feature type="chain" id="PRO_0000148470" description="Dihydroorotate dehydrogenase (quinone)">
    <location>
        <begin position="1"/>
        <end position="344"/>
    </location>
</feature>
<feature type="active site" description="Nucleophile" evidence="1">
    <location>
        <position position="181"/>
    </location>
</feature>
<feature type="binding site" evidence="1">
    <location>
        <begin position="65"/>
        <end position="69"/>
    </location>
    <ligand>
        <name>FMN</name>
        <dbReference type="ChEBI" id="CHEBI:58210"/>
    </ligand>
</feature>
<feature type="binding site" evidence="1">
    <location>
        <position position="69"/>
    </location>
    <ligand>
        <name>substrate</name>
    </ligand>
</feature>
<feature type="binding site" evidence="1">
    <location>
        <position position="89"/>
    </location>
    <ligand>
        <name>FMN</name>
        <dbReference type="ChEBI" id="CHEBI:58210"/>
    </ligand>
</feature>
<feature type="binding site" evidence="1">
    <location>
        <begin position="114"/>
        <end position="118"/>
    </location>
    <ligand>
        <name>substrate</name>
    </ligand>
</feature>
<feature type="binding site" evidence="1">
    <location>
        <position position="145"/>
    </location>
    <ligand>
        <name>FMN</name>
        <dbReference type="ChEBI" id="CHEBI:58210"/>
    </ligand>
</feature>
<feature type="binding site" evidence="1">
    <location>
        <position position="178"/>
    </location>
    <ligand>
        <name>FMN</name>
        <dbReference type="ChEBI" id="CHEBI:58210"/>
    </ligand>
</feature>
<feature type="binding site" evidence="1">
    <location>
        <position position="178"/>
    </location>
    <ligand>
        <name>substrate</name>
    </ligand>
</feature>
<feature type="binding site" evidence="1">
    <location>
        <position position="183"/>
    </location>
    <ligand>
        <name>substrate</name>
    </ligand>
</feature>
<feature type="binding site" evidence="1">
    <location>
        <position position="223"/>
    </location>
    <ligand>
        <name>FMN</name>
        <dbReference type="ChEBI" id="CHEBI:58210"/>
    </ligand>
</feature>
<feature type="binding site" evidence="1">
    <location>
        <position position="251"/>
    </location>
    <ligand>
        <name>FMN</name>
        <dbReference type="ChEBI" id="CHEBI:58210"/>
    </ligand>
</feature>
<feature type="binding site" evidence="1">
    <location>
        <begin position="252"/>
        <end position="253"/>
    </location>
    <ligand>
        <name>substrate</name>
    </ligand>
</feature>
<feature type="binding site" evidence="1">
    <location>
        <position position="274"/>
    </location>
    <ligand>
        <name>FMN</name>
        <dbReference type="ChEBI" id="CHEBI:58210"/>
    </ligand>
</feature>
<feature type="binding site" evidence="1">
    <location>
        <position position="303"/>
    </location>
    <ligand>
        <name>FMN</name>
        <dbReference type="ChEBI" id="CHEBI:58210"/>
    </ligand>
</feature>
<feature type="binding site" evidence="1">
    <location>
        <begin position="324"/>
        <end position="325"/>
    </location>
    <ligand>
        <name>FMN</name>
        <dbReference type="ChEBI" id="CHEBI:58210"/>
    </ligand>
</feature>
<reference key="1">
    <citation type="journal article" date="2002" name="Nature">
        <title>Genome sequence of the plant pathogen Ralstonia solanacearum.</title>
        <authorList>
            <person name="Salanoubat M."/>
            <person name="Genin S."/>
            <person name="Artiguenave F."/>
            <person name="Gouzy J."/>
            <person name="Mangenot S."/>
            <person name="Arlat M."/>
            <person name="Billault A."/>
            <person name="Brottier P."/>
            <person name="Camus J.-C."/>
            <person name="Cattolico L."/>
            <person name="Chandler M."/>
            <person name="Choisne N."/>
            <person name="Claudel-Renard C."/>
            <person name="Cunnac S."/>
            <person name="Demange N."/>
            <person name="Gaspin C."/>
            <person name="Lavie M."/>
            <person name="Moisan A."/>
            <person name="Robert C."/>
            <person name="Saurin W."/>
            <person name="Schiex T."/>
            <person name="Siguier P."/>
            <person name="Thebault P."/>
            <person name="Whalen M."/>
            <person name="Wincker P."/>
            <person name="Levy M."/>
            <person name="Weissenbach J."/>
            <person name="Boucher C.A."/>
        </authorList>
    </citation>
    <scope>NUCLEOTIDE SEQUENCE [LARGE SCALE GENOMIC DNA]</scope>
    <source>
        <strain>ATCC BAA-1114 / GMI1000</strain>
    </source>
</reference>
<keyword id="KW-1003">Cell membrane</keyword>
<keyword id="KW-0285">Flavoprotein</keyword>
<keyword id="KW-0288">FMN</keyword>
<keyword id="KW-0472">Membrane</keyword>
<keyword id="KW-0560">Oxidoreductase</keyword>
<keyword id="KW-0665">Pyrimidine biosynthesis</keyword>
<keyword id="KW-1185">Reference proteome</keyword>
<comment type="function">
    <text evidence="1">Catalyzes the conversion of dihydroorotate to orotate with quinone as electron acceptor.</text>
</comment>
<comment type="catalytic activity">
    <reaction evidence="1">
        <text>(S)-dihydroorotate + a quinone = orotate + a quinol</text>
        <dbReference type="Rhea" id="RHEA:30187"/>
        <dbReference type="ChEBI" id="CHEBI:24646"/>
        <dbReference type="ChEBI" id="CHEBI:30839"/>
        <dbReference type="ChEBI" id="CHEBI:30864"/>
        <dbReference type="ChEBI" id="CHEBI:132124"/>
        <dbReference type="EC" id="1.3.5.2"/>
    </reaction>
</comment>
<comment type="cofactor">
    <cofactor evidence="1">
        <name>FMN</name>
        <dbReference type="ChEBI" id="CHEBI:58210"/>
    </cofactor>
    <text evidence="1">Binds 1 FMN per subunit.</text>
</comment>
<comment type="pathway">
    <text evidence="1">Pyrimidine metabolism; UMP biosynthesis via de novo pathway; orotate from (S)-dihydroorotate (quinone route): step 1/1.</text>
</comment>
<comment type="subunit">
    <text evidence="1">Monomer.</text>
</comment>
<comment type="subcellular location">
    <subcellularLocation>
        <location evidence="1">Cell membrane</location>
        <topology evidence="1">Peripheral membrane protein</topology>
    </subcellularLocation>
</comment>
<comment type="similarity">
    <text evidence="1">Belongs to the dihydroorotate dehydrogenase family. Type 2 subfamily.</text>
</comment>
<proteinExistence type="inferred from homology"/>